<name>YOHC_ECOLI</name>
<sequence>MSHVWGLFSHPDREMQVINRENETISHHYTHHVLLMAAIPVICAFIGTTQIGWNFGDGTILKLSWFTGLALAVLFYGVMLAGVAVMGRVIWWMARNYPQRPSLAHCMVFAGYVATPLFLSGLVALYPLVWLCALVGTVALFYTGYLLYLGIPSFLNINKEEGLSFSSSTLAIGVLVLEVLLALTVILWGYGYRLF</sequence>
<keyword id="KW-0997">Cell inner membrane</keyword>
<keyword id="KW-1003">Cell membrane</keyword>
<keyword id="KW-0472">Membrane</keyword>
<keyword id="KW-1185">Reference proteome</keyword>
<keyword id="KW-0812">Transmembrane</keyword>
<keyword id="KW-1133">Transmembrane helix</keyword>
<accession>P0AD17</accession>
<accession>P33365</accession>
<accession>Q2MAU4</accession>
<evidence type="ECO:0000255" key="1"/>
<evidence type="ECO:0000305" key="2"/>
<protein>
    <recommendedName>
        <fullName>Inner membrane protein YohC</fullName>
    </recommendedName>
</protein>
<proteinExistence type="evidence at protein level"/>
<organism>
    <name type="scientific">Escherichia coli (strain K12)</name>
    <dbReference type="NCBI Taxonomy" id="83333"/>
    <lineage>
        <taxon>Bacteria</taxon>
        <taxon>Pseudomonadati</taxon>
        <taxon>Pseudomonadota</taxon>
        <taxon>Gammaproteobacteria</taxon>
        <taxon>Enterobacterales</taxon>
        <taxon>Enterobacteriaceae</taxon>
        <taxon>Escherichia</taxon>
    </lineage>
</organism>
<comment type="subcellular location">
    <subcellularLocation>
        <location>Cell inner membrane</location>
        <topology>Multi-pass membrane protein</topology>
    </subcellularLocation>
</comment>
<comment type="sequence caution" evidence="2">
    <conflict type="erroneous initiation">
        <sequence resource="EMBL-CDS" id="AAA60497"/>
    </conflict>
    <text>Extended N-terminus.</text>
</comment>
<reference key="1">
    <citation type="submission" date="1993-10" db="EMBL/GenBank/DDBJ databases">
        <title>Automated multiplex sequencing of the E.coli genome.</title>
        <authorList>
            <person name="Richterich P."/>
            <person name="Lakey N."/>
            <person name="Gryan G."/>
            <person name="Jaehn L."/>
            <person name="Mintz L."/>
            <person name="Robison K."/>
            <person name="Church G.M."/>
        </authorList>
    </citation>
    <scope>NUCLEOTIDE SEQUENCE [LARGE SCALE GENOMIC DNA]</scope>
    <source>
        <strain>K12 / BHB2600</strain>
    </source>
</reference>
<reference key="2">
    <citation type="journal article" date="1997" name="Science">
        <title>The complete genome sequence of Escherichia coli K-12.</title>
        <authorList>
            <person name="Blattner F.R."/>
            <person name="Plunkett G. III"/>
            <person name="Bloch C.A."/>
            <person name="Perna N.T."/>
            <person name="Burland V."/>
            <person name="Riley M."/>
            <person name="Collado-Vides J."/>
            <person name="Glasner J.D."/>
            <person name="Rode C.K."/>
            <person name="Mayhew G.F."/>
            <person name="Gregor J."/>
            <person name="Davis N.W."/>
            <person name="Kirkpatrick H.A."/>
            <person name="Goeden M.A."/>
            <person name="Rose D.J."/>
            <person name="Mau B."/>
            <person name="Shao Y."/>
        </authorList>
    </citation>
    <scope>NUCLEOTIDE SEQUENCE [LARGE SCALE GENOMIC DNA]</scope>
    <source>
        <strain>K12 / MG1655 / ATCC 47076</strain>
    </source>
</reference>
<reference key="3">
    <citation type="journal article" date="2006" name="Mol. Syst. Biol.">
        <title>Highly accurate genome sequences of Escherichia coli K-12 strains MG1655 and W3110.</title>
        <authorList>
            <person name="Hayashi K."/>
            <person name="Morooka N."/>
            <person name="Yamamoto Y."/>
            <person name="Fujita K."/>
            <person name="Isono K."/>
            <person name="Choi S."/>
            <person name="Ohtsubo E."/>
            <person name="Baba T."/>
            <person name="Wanner B.L."/>
            <person name="Mori H."/>
            <person name="Horiuchi T."/>
        </authorList>
    </citation>
    <scope>NUCLEOTIDE SEQUENCE [LARGE SCALE GENOMIC DNA]</scope>
    <source>
        <strain>K12 / W3110 / ATCC 27325 / DSM 5911</strain>
    </source>
</reference>
<reference key="4">
    <citation type="journal article" date="2005" name="Science">
        <title>Global topology analysis of the Escherichia coli inner membrane proteome.</title>
        <authorList>
            <person name="Daley D.O."/>
            <person name="Rapp M."/>
            <person name="Granseth E."/>
            <person name="Melen K."/>
            <person name="Drew D."/>
            <person name="von Heijne G."/>
        </authorList>
    </citation>
    <scope>TOPOLOGY [LARGE SCALE ANALYSIS]</scope>
    <source>
        <strain>K12 / MG1655 / ATCC 47076</strain>
    </source>
</reference>
<dbReference type="EMBL" id="U00007">
    <property type="protein sequence ID" value="AAA60497.1"/>
    <property type="status" value="ALT_INIT"/>
    <property type="molecule type" value="Genomic_DNA"/>
</dbReference>
<dbReference type="EMBL" id="U00096">
    <property type="protein sequence ID" value="AAC75196.2"/>
    <property type="molecule type" value="Genomic_DNA"/>
</dbReference>
<dbReference type="EMBL" id="AP009048">
    <property type="protein sequence ID" value="BAE76612.1"/>
    <property type="molecule type" value="Genomic_DNA"/>
</dbReference>
<dbReference type="RefSeq" id="NP_416639.2">
    <property type="nucleotide sequence ID" value="NC_000913.3"/>
</dbReference>
<dbReference type="RefSeq" id="WP_001295454.1">
    <property type="nucleotide sequence ID" value="NZ_SSZK01000011.1"/>
</dbReference>
<dbReference type="SMR" id="P0AD17"/>
<dbReference type="BioGRID" id="4261820">
    <property type="interactions" value="8"/>
</dbReference>
<dbReference type="BioGRID" id="851008">
    <property type="interactions" value="2"/>
</dbReference>
<dbReference type="FunCoup" id="P0AD17">
    <property type="interactions" value="40"/>
</dbReference>
<dbReference type="IntAct" id="P0AD17">
    <property type="interactions" value="2"/>
</dbReference>
<dbReference type="STRING" id="511145.b2135"/>
<dbReference type="PaxDb" id="511145-b2135"/>
<dbReference type="EnsemblBacteria" id="AAC75196">
    <property type="protein sequence ID" value="AAC75196"/>
    <property type="gene ID" value="b2135"/>
</dbReference>
<dbReference type="GeneID" id="946666"/>
<dbReference type="KEGG" id="ecj:JW5356"/>
<dbReference type="KEGG" id="eco:b2135"/>
<dbReference type="KEGG" id="ecoc:C3026_11970"/>
<dbReference type="PATRIC" id="fig|1411691.4.peg.107"/>
<dbReference type="EchoBASE" id="EB1953"/>
<dbReference type="eggNOG" id="ENOG502Z7KS">
    <property type="taxonomic scope" value="Bacteria"/>
</dbReference>
<dbReference type="HOGENOM" id="CLU_099801_0_0_6"/>
<dbReference type="InParanoid" id="P0AD17"/>
<dbReference type="OMA" id="HPKEEWH"/>
<dbReference type="OrthoDB" id="9808452at2"/>
<dbReference type="PhylomeDB" id="P0AD17"/>
<dbReference type="BioCyc" id="EcoCyc:EG12016-MONOMER"/>
<dbReference type="PRO" id="PR:P0AD17"/>
<dbReference type="Proteomes" id="UP000000625">
    <property type="component" value="Chromosome"/>
</dbReference>
<dbReference type="GO" id="GO:0005886">
    <property type="term" value="C:plasma membrane"/>
    <property type="evidence" value="ECO:0000314"/>
    <property type="project" value="EcoCyc"/>
</dbReference>
<dbReference type="GO" id="GO:0006974">
    <property type="term" value="P:DNA damage response"/>
    <property type="evidence" value="ECO:0000270"/>
    <property type="project" value="EcoliWiki"/>
</dbReference>
<dbReference type="InterPro" id="IPR006977">
    <property type="entry name" value="Yip1_dom"/>
</dbReference>
<dbReference type="Pfam" id="PF04893">
    <property type="entry name" value="Yip1"/>
    <property type="match status" value="1"/>
</dbReference>
<gene>
    <name type="primary">yohC</name>
    <name type="ordered locus">b2135</name>
    <name type="ordered locus">JW5356</name>
</gene>
<feature type="chain" id="PRO_0000169138" description="Inner membrane protein YohC">
    <location>
        <begin position="1"/>
        <end position="195"/>
    </location>
</feature>
<feature type="topological domain" description="Cytoplasmic" evidence="1">
    <location>
        <begin position="1"/>
        <end position="32"/>
    </location>
</feature>
<feature type="transmembrane region" description="Helical" evidence="1">
    <location>
        <begin position="33"/>
        <end position="55"/>
    </location>
</feature>
<feature type="topological domain" description="Periplasmic" evidence="1">
    <location>
        <begin position="56"/>
        <end position="64"/>
    </location>
</feature>
<feature type="transmembrane region" description="Helical" evidence="1">
    <location>
        <begin position="65"/>
        <end position="87"/>
    </location>
</feature>
<feature type="topological domain" description="Cytoplasmic" evidence="1">
    <location>
        <begin position="88"/>
        <end position="107"/>
    </location>
</feature>
<feature type="transmembrane region" description="Helical" evidence="1">
    <location>
        <begin position="108"/>
        <end position="130"/>
    </location>
</feature>
<feature type="topological domain" description="Periplasmic" evidence="1">
    <location>
        <begin position="131"/>
        <end position="134"/>
    </location>
</feature>
<feature type="transmembrane region" description="Helical" evidence="1">
    <location>
        <begin position="135"/>
        <end position="157"/>
    </location>
</feature>
<feature type="topological domain" description="Cytoplasmic" evidence="1">
    <location>
        <begin position="158"/>
        <end position="169"/>
    </location>
</feature>
<feature type="transmembrane region" description="Helical" evidence="1">
    <location>
        <begin position="170"/>
        <end position="192"/>
    </location>
</feature>
<feature type="topological domain" description="Periplasmic" evidence="1">
    <location>
        <begin position="193"/>
        <end position="195"/>
    </location>
</feature>